<feature type="chain" id="PRO_0000331711" description="Homeobox-leucine zipper protein HOX19">
    <location>
        <begin position="1"/>
        <end position="292"/>
    </location>
</feature>
<feature type="DNA-binding region" description="Homeobox" evidence="2">
    <location>
        <begin position="124"/>
        <end position="183"/>
    </location>
</feature>
<feature type="region of interest" description="Disordered" evidence="3">
    <location>
        <begin position="14"/>
        <end position="85"/>
    </location>
</feature>
<feature type="region of interest" description="Disordered" evidence="3">
    <location>
        <begin position="99"/>
        <end position="133"/>
    </location>
</feature>
<feature type="region of interest" description="Leucine-zipper">
    <location>
        <begin position="182"/>
        <end position="226"/>
    </location>
</feature>
<feature type="region of interest" description="Disordered" evidence="3">
    <location>
        <begin position="217"/>
        <end position="236"/>
    </location>
</feature>
<feature type="compositionally biased region" description="Low complexity" evidence="3">
    <location>
        <begin position="28"/>
        <end position="74"/>
    </location>
</feature>
<feature type="compositionally biased region" description="Basic and acidic residues" evidence="3">
    <location>
        <begin position="99"/>
        <end position="109"/>
    </location>
</feature>
<feature type="sequence conflict" description="In Ref. 5; ABQ57283." evidence="5" ref="5">
    <location>
        <begin position="33"/>
        <end position="96"/>
    </location>
</feature>
<protein>
    <recommendedName>
        <fullName>Homeobox-leucine zipper protein HOX19</fullName>
    </recommendedName>
    <alternativeName>
        <fullName>HD-ZIP protein HOX19</fullName>
    </alternativeName>
    <alternativeName>
        <fullName>Homeodomain transcription factor HOX19</fullName>
    </alternativeName>
    <alternativeName>
        <fullName>OsHox19</fullName>
    </alternativeName>
</protein>
<sequence length="292" mass="30516">MAQEDVGHLSDAGLALGLSLGGGGGGTTDAAAAHRGGCRRPSPSSQCPPLEPSLTLSLPDDAAAGAAATATATASGGGGPAHSVSSLSVGAAAAAAVKRERAEEADGERVSSTAAGRDDDDDGSTRKKLRLTKEQSALLEDRFREHSTLNPKQKVALAKQLNLRPRQVEVWFQNRRARTKLKQTEVDCEFLKRCCETLTEENRRLQRELQELRALKFAPPPPSSAAHQPSPAPPAPFYMQLPAATLTICPSCERVGGPASAAKVVAADGTKAGPGRTTTHHFFNPFTHSAAC</sequence>
<gene>
    <name type="primary">HOX19</name>
    <name type="ordered locus">Os03g0231000</name>
    <name type="ordered locus">LOC_Os03g12860</name>
    <name type="ORF">OJ1017C11.5</name>
    <name type="ORF">OJ1781E12.8</name>
</gene>
<organism>
    <name type="scientific">Oryza sativa subsp. japonica</name>
    <name type="common">Rice</name>
    <dbReference type="NCBI Taxonomy" id="39947"/>
    <lineage>
        <taxon>Eukaryota</taxon>
        <taxon>Viridiplantae</taxon>
        <taxon>Streptophyta</taxon>
        <taxon>Embryophyta</taxon>
        <taxon>Tracheophyta</taxon>
        <taxon>Spermatophyta</taxon>
        <taxon>Magnoliopsida</taxon>
        <taxon>Liliopsida</taxon>
        <taxon>Poales</taxon>
        <taxon>Poaceae</taxon>
        <taxon>BOP clade</taxon>
        <taxon>Oryzoideae</taxon>
        <taxon>Oryzeae</taxon>
        <taxon>Oryzinae</taxon>
        <taxon>Oryza</taxon>
        <taxon>Oryza sativa</taxon>
    </lineage>
</organism>
<evidence type="ECO:0000250" key="1"/>
<evidence type="ECO:0000255" key="2">
    <source>
        <dbReference type="PROSITE-ProRule" id="PRU00108"/>
    </source>
</evidence>
<evidence type="ECO:0000256" key="3">
    <source>
        <dbReference type="SAM" id="MobiDB-lite"/>
    </source>
</evidence>
<evidence type="ECO:0000269" key="4">
    <source>
    </source>
</evidence>
<evidence type="ECO:0000305" key="5"/>
<accession>Q8GRL4</accession>
<accession>A5JPV7</accession>
<accession>Q6Q7E1</accession>
<proteinExistence type="evidence at transcript level"/>
<keyword id="KW-0238">DNA-binding</keyword>
<keyword id="KW-0371">Homeobox</keyword>
<keyword id="KW-0539">Nucleus</keyword>
<keyword id="KW-1185">Reference proteome</keyword>
<keyword id="KW-0804">Transcription</keyword>
<keyword id="KW-0805">Transcription regulation</keyword>
<comment type="function">
    <text evidence="1">Probable transcription factor.</text>
</comment>
<comment type="subcellular location">
    <subcellularLocation>
        <location evidence="5">Nucleus</location>
    </subcellularLocation>
</comment>
<comment type="tissue specificity">
    <text evidence="4">Expressed in seedlings, roots, stems, leaf sheaths and blades and panicles.</text>
</comment>
<comment type="induction">
    <text evidence="4">In leaves by drought stress.</text>
</comment>
<comment type="similarity">
    <text evidence="5">Belongs to the HD-ZIP homeobox family. Class II subfamily.</text>
</comment>
<comment type="sequence caution" evidence="5">
    <conflict type="erroneous gene model prediction">
        <sequence resource="EMBL-CDS" id="BAF11372"/>
    </conflict>
</comment>
<reference key="1">
    <citation type="journal article" date="2005" name="Genome Res.">
        <title>Sequence, annotation, and analysis of synteny between rice chromosome 3 and diverged grass species.</title>
        <authorList>
            <consortium name="The rice chromosome 3 sequencing consortium"/>
            <person name="Buell C.R."/>
            <person name="Yuan Q."/>
            <person name="Ouyang S."/>
            <person name="Liu J."/>
            <person name="Zhu W."/>
            <person name="Wang A."/>
            <person name="Maiti R."/>
            <person name="Haas B."/>
            <person name="Wortman J."/>
            <person name="Pertea M."/>
            <person name="Jones K.M."/>
            <person name="Kim M."/>
            <person name="Overton L."/>
            <person name="Tsitrin T."/>
            <person name="Fadrosh D."/>
            <person name="Bera J."/>
            <person name="Weaver B."/>
            <person name="Jin S."/>
            <person name="Johri S."/>
            <person name="Reardon M."/>
            <person name="Webb K."/>
            <person name="Hill J."/>
            <person name="Moffat K."/>
            <person name="Tallon L."/>
            <person name="Van Aken S."/>
            <person name="Lewis M."/>
            <person name="Utterback T."/>
            <person name="Feldblyum T."/>
            <person name="Zismann V."/>
            <person name="Iobst S."/>
            <person name="Hsiao J."/>
            <person name="de Vazeille A.R."/>
            <person name="Salzberg S.L."/>
            <person name="White O."/>
            <person name="Fraser C.M."/>
            <person name="Yu Y."/>
            <person name="Kim H."/>
            <person name="Rambo T."/>
            <person name="Currie J."/>
            <person name="Collura K."/>
            <person name="Kernodle-Thompson S."/>
            <person name="Wei F."/>
            <person name="Kudrna K."/>
            <person name="Ammiraju J.S.S."/>
            <person name="Luo M."/>
            <person name="Goicoechea J.L."/>
            <person name="Wing R.A."/>
            <person name="Henry D."/>
            <person name="Oates R."/>
            <person name="Palmer M."/>
            <person name="Pries G."/>
            <person name="Saski C."/>
            <person name="Simmons J."/>
            <person name="Soderlund C."/>
            <person name="Nelson W."/>
            <person name="de la Bastide M."/>
            <person name="Spiegel L."/>
            <person name="Nascimento L."/>
            <person name="Huang E."/>
            <person name="Preston R."/>
            <person name="Zutavern T."/>
            <person name="Palmer L."/>
            <person name="O'Shaughnessy A."/>
            <person name="Dike S."/>
            <person name="McCombie W.R."/>
            <person name="Minx P."/>
            <person name="Cordum H."/>
            <person name="Wilson R."/>
            <person name="Jin W."/>
            <person name="Lee H.R."/>
            <person name="Jiang J."/>
            <person name="Jackson S."/>
        </authorList>
    </citation>
    <scope>NUCLEOTIDE SEQUENCE [LARGE SCALE GENOMIC DNA]</scope>
    <source>
        <strain>cv. Nipponbare</strain>
    </source>
</reference>
<reference key="2">
    <citation type="journal article" date="2005" name="Nature">
        <title>The map-based sequence of the rice genome.</title>
        <authorList>
            <consortium name="International rice genome sequencing project (IRGSP)"/>
        </authorList>
    </citation>
    <scope>NUCLEOTIDE SEQUENCE [LARGE SCALE GENOMIC DNA]</scope>
    <source>
        <strain>cv. Nipponbare</strain>
    </source>
</reference>
<reference key="3">
    <citation type="journal article" date="2008" name="Nucleic Acids Res.">
        <title>The rice annotation project database (RAP-DB): 2008 update.</title>
        <authorList>
            <consortium name="The rice annotation project (RAP)"/>
        </authorList>
    </citation>
    <scope>GENOME REANNOTATION</scope>
    <source>
        <strain>cv. Nipponbare</strain>
    </source>
</reference>
<reference key="4">
    <citation type="journal article" date="2013" name="Rice">
        <title>Improvement of the Oryza sativa Nipponbare reference genome using next generation sequence and optical map data.</title>
        <authorList>
            <person name="Kawahara Y."/>
            <person name="de la Bastide M."/>
            <person name="Hamilton J.P."/>
            <person name="Kanamori H."/>
            <person name="McCombie W.R."/>
            <person name="Ouyang S."/>
            <person name="Schwartz D.C."/>
            <person name="Tanaka T."/>
            <person name="Wu J."/>
            <person name="Zhou S."/>
            <person name="Childs K.L."/>
            <person name="Davidson R.M."/>
            <person name="Lin H."/>
            <person name="Quesada-Ocampo L."/>
            <person name="Vaillancourt B."/>
            <person name="Sakai H."/>
            <person name="Lee S.S."/>
            <person name="Kim J."/>
            <person name="Numa H."/>
            <person name="Itoh T."/>
            <person name="Buell C.R."/>
            <person name="Matsumoto T."/>
        </authorList>
    </citation>
    <scope>GENOME REANNOTATION</scope>
    <source>
        <strain>cv. Nipponbare</strain>
    </source>
</reference>
<reference key="5">
    <citation type="journal article" date="2008" name="Plant Mol. Biol.">
        <title>A genome-wide survey of HD-Zip genes in rice and analysis of drought-responsive family members.</title>
        <authorList>
            <person name="Agalou A."/>
            <person name="Purwantomo S."/>
            <person name="Oevernaes E."/>
            <person name="Johannesson H."/>
            <person name="Zhu X."/>
            <person name="Estiati A."/>
            <person name="de Kam R.J."/>
            <person name="Engstroem P."/>
            <person name="Slamet-Loedin I.H."/>
            <person name="Zhu Z."/>
            <person name="Wang M."/>
            <person name="Xiong L."/>
            <person name="Meijer A.H."/>
            <person name="Ouwerkerk P.B.F."/>
        </authorList>
    </citation>
    <scope>NUCLEOTIDE SEQUENCE [MRNA] OF 1-68 AND 2-177</scope>
    <scope>TISSUE SPECIFICITY</scope>
    <scope>INDUCTION</scope>
    <scope>GENE FAMILY</scope>
    <scope>NOMENCLATURE</scope>
    <source>
        <strain>cv. Nipponbare</strain>
    </source>
</reference>
<name>HOX19_ORYSJ</name>
<dbReference type="EMBL" id="AC105927">
    <property type="protein sequence ID" value="AAO06960.1"/>
    <property type="molecule type" value="Genomic_DNA"/>
</dbReference>
<dbReference type="EMBL" id="AC135157">
    <property type="protein sequence ID" value="AAO00684.1"/>
    <property type="molecule type" value="Genomic_DNA"/>
</dbReference>
<dbReference type="EMBL" id="DP000009">
    <property type="protein sequence ID" value="ABF94782.1"/>
    <property type="molecule type" value="Genomic_DNA"/>
</dbReference>
<dbReference type="EMBL" id="AP008209">
    <property type="protein sequence ID" value="BAF11372.1"/>
    <property type="status" value="ALT_SEQ"/>
    <property type="molecule type" value="Genomic_DNA"/>
</dbReference>
<dbReference type="EMBL" id="AP014959">
    <property type="status" value="NOT_ANNOTATED_CDS"/>
    <property type="molecule type" value="Genomic_DNA"/>
</dbReference>
<dbReference type="EMBL" id="AY554031">
    <property type="protein sequence ID" value="AAS83419.1"/>
    <property type="molecule type" value="mRNA"/>
</dbReference>
<dbReference type="EMBL" id="EF555542">
    <property type="protein sequence ID" value="ABQ57283.1"/>
    <property type="molecule type" value="mRNA"/>
</dbReference>
<dbReference type="RefSeq" id="XP_015627844.1">
    <property type="nucleotide sequence ID" value="XM_015772358.1"/>
</dbReference>
<dbReference type="SMR" id="Q8GRL4"/>
<dbReference type="FunCoup" id="Q8GRL4">
    <property type="interactions" value="14"/>
</dbReference>
<dbReference type="STRING" id="39947.Q8GRL4"/>
<dbReference type="PaxDb" id="39947-Q8GRL4"/>
<dbReference type="GeneID" id="4332147"/>
<dbReference type="KEGG" id="dosa:Os03g0231000"/>
<dbReference type="eggNOG" id="KOG0483">
    <property type="taxonomic scope" value="Eukaryota"/>
</dbReference>
<dbReference type="HOGENOM" id="CLU_2216706_0_0_1"/>
<dbReference type="InParanoid" id="Q8GRL4"/>
<dbReference type="OrthoDB" id="6159439at2759"/>
<dbReference type="Proteomes" id="UP000000763">
    <property type="component" value="Chromosome 3"/>
</dbReference>
<dbReference type="Proteomes" id="UP000059680">
    <property type="component" value="Chromosome 3"/>
</dbReference>
<dbReference type="GO" id="GO:0005634">
    <property type="term" value="C:nucleus"/>
    <property type="evidence" value="ECO:0007669"/>
    <property type="project" value="UniProtKB-SubCell"/>
</dbReference>
<dbReference type="GO" id="GO:0000981">
    <property type="term" value="F:DNA-binding transcription factor activity, RNA polymerase II-specific"/>
    <property type="evidence" value="ECO:0007669"/>
    <property type="project" value="InterPro"/>
</dbReference>
<dbReference type="GO" id="GO:0043565">
    <property type="term" value="F:sequence-specific DNA binding"/>
    <property type="evidence" value="ECO:0007669"/>
    <property type="project" value="InterPro"/>
</dbReference>
<dbReference type="CDD" id="cd00086">
    <property type="entry name" value="homeodomain"/>
    <property type="match status" value="1"/>
</dbReference>
<dbReference type="FunFam" id="1.10.10.60:FF:000577">
    <property type="entry name" value="Homeobox-leucine zipper protein 18"/>
    <property type="match status" value="1"/>
</dbReference>
<dbReference type="Gene3D" id="1.10.10.60">
    <property type="entry name" value="Homeodomain-like"/>
    <property type="match status" value="1"/>
</dbReference>
<dbReference type="InterPro" id="IPR001356">
    <property type="entry name" value="HD"/>
</dbReference>
<dbReference type="InterPro" id="IPR050762">
    <property type="entry name" value="HD-ZIP_Homeobox_LZ_Class_II"/>
</dbReference>
<dbReference type="InterPro" id="IPR017970">
    <property type="entry name" value="Homeobox_CS"/>
</dbReference>
<dbReference type="InterPro" id="IPR009057">
    <property type="entry name" value="Homeodomain-like_sf"/>
</dbReference>
<dbReference type="InterPro" id="IPR003106">
    <property type="entry name" value="Leu_zip_homeo"/>
</dbReference>
<dbReference type="PANTHER" id="PTHR45714">
    <property type="entry name" value="HOMEOBOX-LEUCINE ZIPPER PROTEIN HAT14"/>
    <property type="match status" value="1"/>
</dbReference>
<dbReference type="PANTHER" id="PTHR45714:SF34">
    <property type="entry name" value="HOMEOBOX-LEUCINE ZIPPER PROTEIN HAT9"/>
    <property type="match status" value="1"/>
</dbReference>
<dbReference type="Pfam" id="PF02183">
    <property type="entry name" value="HALZ"/>
    <property type="match status" value="1"/>
</dbReference>
<dbReference type="Pfam" id="PF00046">
    <property type="entry name" value="Homeodomain"/>
    <property type="match status" value="1"/>
</dbReference>
<dbReference type="SMART" id="SM00340">
    <property type="entry name" value="HALZ"/>
    <property type="match status" value="1"/>
</dbReference>
<dbReference type="SMART" id="SM00389">
    <property type="entry name" value="HOX"/>
    <property type="match status" value="1"/>
</dbReference>
<dbReference type="SUPFAM" id="SSF46689">
    <property type="entry name" value="Homeodomain-like"/>
    <property type="match status" value="1"/>
</dbReference>
<dbReference type="PROSITE" id="PS00027">
    <property type="entry name" value="HOMEOBOX_1"/>
    <property type="match status" value="1"/>
</dbReference>
<dbReference type="PROSITE" id="PS50071">
    <property type="entry name" value="HOMEOBOX_2"/>
    <property type="match status" value="1"/>
</dbReference>